<accession>Q8YC73</accession>
<dbReference type="EMBL" id="AE008918">
    <property type="protein sequence ID" value="AAL53901.1"/>
    <property type="molecule type" value="Genomic_DNA"/>
</dbReference>
<dbReference type="PIR" id="AB3592">
    <property type="entry name" value="AB3592"/>
</dbReference>
<dbReference type="RefSeq" id="WP_002966022.1">
    <property type="nucleotide sequence ID" value="NZ_GG703779.1"/>
</dbReference>
<dbReference type="SMR" id="Q8YC73"/>
<dbReference type="IntAct" id="Q8YC73">
    <property type="interactions" value="1"/>
</dbReference>
<dbReference type="KEGG" id="bme:BMEII0659"/>
<dbReference type="KEGG" id="bmel:DK63_2586"/>
<dbReference type="PATRIC" id="fig|224914.52.peg.2710"/>
<dbReference type="eggNOG" id="COG0784">
    <property type="taxonomic scope" value="Bacteria"/>
</dbReference>
<dbReference type="Proteomes" id="UP000000419">
    <property type="component" value="Chromosome II"/>
</dbReference>
<dbReference type="GO" id="GO:0005737">
    <property type="term" value="C:cytoplasm"/>
    <property type="evidence" value="ECO:0007669"/>
    <property type="project" value="UniProtKB-SubCell"/>
</dbReference>
<dbReference type="GO" id="GO:0003677">
    <property type="term" value="F:DNA binding"/>
    <property type="evidence" value="ECO:0007669"/>
    <property type="project" value="UniProtKB-KW"/>
</dbReference>
<dbReference type="GO" id="GO:0000160">
    <property type="term" value="P:phosphorelay signal transduction system"/>
    <property type="evidence" value="ECO:0007669"/>
    <property type="project" value="UniProtKB-KW"/>
</dbReference>
<dbReference type="CDD" id="cd17548">
    <property type="entry name" value="REC_DivK-like"/>
    <property type="match status" value="1"/>
</dbReference>
<dbReference type="Gene3D" id="3.40.50.2300">
    <property type="match status" value="1"/>
</dbReference>
<dbReference type="InterPro" id="IPR050595">
    <property type="entry name" value="Bact_response_regulator"/>
</dbReference>
<dbReference type="InterPro" id="IPR011006">
    <property type="entry name" value="CheY-like_superfamily"/>
</dbReference>
<dbReference type="InterPro" id="IPR001789">
    <property type="entry name" value="Sig_transdc_resp-reg_receiver"/>
</dbReference>
<dbReference type="PANTHER" id="PTHR44591:SF3">
    <property type="entry name" value="RESPONSE REGULATORY DOMAIN-CONTAINING PROTEIN"/>
    <property type="match status" value="1"/>
</dbReference>
<dbReference type="PANTHER" id="PTHR44591">
    <property type="entry name" value="STRESS RESPONSE REGULATOR PROTEIN 1"/>
    <property type="match status" value="1"/>
</dbReference>
<dbReference type="Pfam" id="PF00072">
    <property type="entry name" value="Response_reg"/>
    <property type="match status" value="1"/>
</dbReference>
<dbReference type="SMART" id="SM00448">
    <property type="entry name" value="REC"/>
    <property type="match status" value="1"/>
</dbReference>
<dbReference type="SUPFAM" id="SSF52172">
    <property type="entry name" value="CheY-like"/>
    <property type="match status" value="1"/>
</dbReference>
<dbReference type="PROSITE" id="PS50110">
    <property type="entry name" value="RESPONSE_REGULATORY"/>
    <property type="match status" value="1"/>
</dbReference>
<feature type="chain" id="PRO_0000363208" description="Polar-differentiation response regulator DivK">
    <location>
        <begin position="1"/>
        <end position="123"/>
    </location>
</feature>
<feature type="domain" description="Response regulatory" evidence="2">
    <location>
        <begin position="4"/>
        <end position="120"/>
    </location>
</feature>
<feature type="modified residue" description="4-aspartylphosphate" evidence="2">
    <location>
        <position position="53"/>
    </location>
</feature>
<comment type="function">
    <text evidence="1">Essential protein that is involved in the control of cell division, probably through the regulation of ctrA. Its phosphorylation status is regulated by PdhS (By similarity).</text>
</comment>
<comment type="subunit">
    <text evidence="1">Interacts with DivL, PleC, DivJ and PdhS.</text>
</comment>
<comment type="subcellular location">
    <subcellularLocation>
        <location evidence="1">Cytoplasm</location>
    </subcellularLocation>
    <text evidence="1">Localized at one pole of the cell. Colocalizes with PdhS (By similarity).</text>
</comment>
<gene>
    <name type="primary">divK</name>
    <name type="ordered locus">BMEII0659</name>
</gene>
<organism>
    <name type="scientific">Brucella melitensis biotype 1 (strain ATCC 23456 / CCUG 17765 / NCTC 10094 / 16M)</name>
    <dbReference type="NCBI Taxonomy" id="224914"/>
    <lineage>
        <taxon>Bacteria</taxon>
        <taxon>Pseudomonadati</taxon>
        <taxon>Pseudomonadota</taxon>
        <taxon>Alphaproteobacteria</taxon>
        <taxon>Hyphomicrobiales</taxon>
        <taxon>Brucellaceae</taxon>
        <taxon>Brucella/Ochrobactrum group</taxon>
        <taxon>Brucella</taxon>
    </lineage>
</organism>
<evidence type="ECO:0000250" key="1"/>
<evidence type="ECO:0000255" key="2">
    <source>
        <dbReference type="PROSITE-ProRule" id="PRU00169"/>
    </source>
</evidence>
<proteinExistence type="inferred from homology"/>
<reference key="1">
    <citation type="journal article" date="2002" name="Proc. Natl. Acad. Sci. U.S.A.">
        <title>The genome sequence of the facultative intracellular pathogen Brucella melitensis.</title>
        <authorList>
            <person name="DelVecchio V.G."/>
            <person name="Kapatral V."/>
            <person name="Redkar R.J."/>
            <person name="Patra G."/>
            <person name="Mujer C."/>
            <person name="Los T."/>
            <person name="Ivanova N."/>
            <person name="Anderson I."/>
            <person name="Bhattacharyya A."/>
            <person name="Lykidis A."/>
            <person name="Reznik G."/>
            <person name="Jablonski L."/>
            <person name="Larsen N."/>
            <person name="D'Souza M."/>
            <person name="Bernal A."/>
            <person name="Mazur M."/>
            <person name="Goltsman E."/>
            <person name="Selkov E."/>
            <person name="Elzer P.H."/>
            <person name="Hagius S."/>
            <person name="O'Callaghan D."/>
            <person name="Letesson J.-J."/>
            <person name="Haselkorn R."/>
            <person name="Kyrpides N.C."/>
            <person name="Overbeek R."/>
        </authorList>
    </citation>
    <scope>NUCLEOTIDE SEQUENCE [LARGE SCALE GENOMIC DNA]</scope>
    <source>
        <strain>ATCC 23456 / CCUG 17765 / NCTC 10094 / 16M</strain>
    </source>
</reference>
<name>DIVK_BRUME</name>
<sequence length="123" mass="13973">MTKSVMIVEDNELNMKLFRDLIEASGYETIRTRSGLEALDLAREHHPDLILMDIQLPEVSGLEVTKWLKDDEELRHIPVIAVTAFAMKGDEERIRQGGCEAYISKPISVPRFIETIKSYLGDA</sequence>
<protein>
    <recommendedName>
        <fullName>Polar-differentiation response regulator DivK</fullName>
    </recommendedName>
</protein>
<keyword id="KW-0963">Cytoplasm</keyword>
<keyword id="KW-0238">DNA-binding</keyword>
<keyword id="KW-0597">Phosphoprotein</keyword>
<keyword id="KW-0804">Transcription</keyword>
<keyword id="KW-0805">Transcription regulation</keyword>
<keyword id="KW-0902">Two-component regulatory system</keyword>